<feature type="chain" id="PRO_0000381414" description="Biotin synthase">
    <location>
        <begin position="1"/>
        <end position="333"/>
    </location>
</feature>
<feature type="domain" description="Radical SAM core" evidence="2">
    <location>
        <begin position="51"/>
        <end position="278"/>
    </location>
</feature>
<feature type="binding site" evidence="1">
    <location>
        <position position="66"/>
    </location>
    <ligand>
        <name>[4Fe-4S] cluster</name>
        <dbReference type="ChEBI" id="CHEBI:49883"/>
        <note>4Fe-4S-S-AdoMet</note>
    </ligand>
</feature>
<feature type="binding site" evidence="1">
    <location>
        <position position="70"/>
    </location>
    <ligand>
        <name>[4Fe-4S] cluster</name>
        <dbReference type="ChEBI" id="CHEBI:49883"/>
        <note>4Fe-4S-S-AdoMet</note>
    </ligand>
</feature>
<feature type="binding site" evidence="1">
    <location>
        <position position="73"/>
    </location>
    <ligand>
        <name>[4Fe-4S] cluster</name>
        <dbReference type="ChEBI" id="CHEBI:49883"/>
        <note>4Fe-4S-S-AdoMet</note>
    </ligand>
</feature>
<feature type="binding site" evidence="1">
    <location>
        <position position="110"/>
    </location>
    <ligand>
        <name>[2Fe-2S] cluster</name>
        <dbReference type="ChEBI" id="CHEBI:190135"/>
    </ligand>
</feature>
<feature type="binding site" evidence="1">
    <location>
        <position position="141"/>
    </location>
    <ligand>
        <name>[2Fe-2S] cluster</name>
        <dbReference type="ChEBI" id="CHEBI:190135"/>
    </ligand>
</feature>
<feature type="binding site" evidence="1">
    <location>
        <position position="201"/>
    </location>
    <ligand>
        <name>[2Fe-2S] cluster</name>
        <dbReference type="ChEBI" id="CHEBI:190135"/>
    </ligand>
</feature>
<feature type="binding site" evidence="1">
    <location>
        <position position="273"/>
    </location>
    <ligand>
        <name>[2Fe-2S] cluster</name>
        <dbReference type="ChEBI" id="CHEBI:190135"/>
    </ligand>
</feature>
<evidence type="ECO:0000255" key="1">
    <source>
        <dbReference type="HAMAP-Rule" id="MF_01694"/>
    </source>
</evidence>
<evidence type="ECO:0000255" key="2">
    <source>
        <dbReference type="PROSITE-ProRule" id="PRU01266"/>
    </source>
</evidence>
<name>BIOB_HAEI8</name>
<gene>
    <name evidence="1" type="primary">bioB</name>
    <name type="ordered locus">NTHI1188</name>
</gene>
<sequence length="333" mass="36785">MLAEKLQINSITPHPSVEYWSVCKVEALFETPFLELVYRATQVHRKHFNPRAIQLSTLMSIKTGGCPEDCSYCPQSARYHTGVQNQQLLDVDEIVAKAKIAKARGAGRFCMGAAWRGPKPKDIEKVTEIIKAVKSLGLETCGTFGLLQDGMAEDLKEAGLDYYNHNLDTAPEHYAEVIGTRRFDDRLSTLGKVRKAGLKVCCGGIVGMNETRKERAGLIASLANLDPQPESVPINQLVKVEGTPLADAEELDWTEFVRTIAVARITMPKSYVRLSAGRSGMTEEMQAMCFMAGANSIFYGDKLLVTDNPEEDGDQLLMAKLDLEPETAENKKL</sequence>
<accession>Q4QLQ0</accession>
<comment type="function">
    <text evidence="1">Catalyzes the conversion of dethiobiotin (DTB) to biotin by the insertion of a sulfur atom into dethiobiotin via a radical-based mechanism.</text>
</comment>
<comment type="catalytic activity">
    <reaction evidence="1">
        <text>(4R,5S)-dethiobiotin + (sulfur carrier)-SH + 2 reduced [2Fe-2S]-[ferredoxin] + 2 S-adenosyl-L-methionine = (sulfur carrier)-H + biotin + 2 5'-deoxyadenosine + 2 L-methionine + 2 oxidized [2Fe-2S]-[ferredoxin]</text>
        <dbReference type="Rhea" id="RHEA:22060"/>
        <dbReference type="Rhea" id="RHEA-COMP:10000"/>
        <dbReference type="Rhea" id="RHEA-COMP:10001"/>
        <dbReference type="Rhea" id="RHEA-COMP:14737"/>
        <dbReference type="Rhea" id="RHEA-COMP:14739"/>
        <dbReference type="ChEBI" id="CHEBI:17319"/>
        <dbReference type="ChEBI" id="CHEBI:29917"/>
        <dbReference type="ChEBI" id="CHEBI:33737"/>
        <dbReference type="ChEBI" id="CHEBI:33738"/>
        <dbReference type="ChEBI" id="CHEBI:57586"/>
        <dbReference type="ChEBI" id="CHEBI:57844"/>
        <dbReference type="ChEBI" id="CHEBI:59789"/>
        <dbReference type="ChEBI" id="CHEBI:64428"/>
        <dbReference type="ChEBI" id="CHEBI:149473"/>
        <dbReference type="EC" id="2.8.1.6"/>
    </reaction>
</comment>
<comment type="cofactor">
    <cofactor evidence="1">
        <name>[4Fe-4S] cluster</name>
        <dbReference type="ChEBI" id="CHEBI:49883"/>
    </cofactor>
    <text evidence="1">Binds 1 [4Fe-4S] cluster. The cluster is coordinated with 3 cysteines and an exchangeable S-adenosyl-L-methionine.</text>
</comment>
<comment type="cofactor">
    <cofactor evidence="1">
        <name>[2Fe-2S] cluster</name>
        <dbReference type="ChEBI" id="CHEBI:190135"/>
    </cofactor>
    <text evidence="1">Binds 1 [2Fe-2S] cluster. The cluster is coordinated with 3 cysteines and 1 arginine.</text>
</comment>
<comment type="pathway">
    <text evidence="1">Cofactor biosynthesis; biotin biosynthesis; biotin from 7,8-diaminononanoate: step 2/2.</text>
</comment>
<comment type="subunit">
    <text evidence="1">Homodimer.</text>
</comment>
<comment type="similarity">
    <text evidence="1">Belongs to the radical SAM superfamily. Biotin synthase family.</text>
</comment>
<reference key="1">
    <citation type="journal article" date="2005" name="J. Bacteriol.">
        <title>Genomic sequence of an otitis media isolate of nontypeable Haemophilus influenzae: comparative study with H. influenzae serotype d, strain KW20.</title>
        <authorList>
            <person name="Harrison A."/>
            <person name="Dyer D.W."/>
            <person name="Gillaspy A."/>
            <person name="Ray W.C."/>
            <person name="Mungur R."/>
            <person name="Carson M.B."/>
            <person name="Zhong H."/>
            <person name="Gipson J."/>
            <person name="Gipson M."/>
            <person name="Johnson L.S."/>
            <person name="Lewis L."/>
            <person name="Bakaletz L.O."/>
            <person name="Munson R.S. Jr."/>
        </authorList>
    </citation>
    <scope>NUCLEOTIDE SEQUENCE [LARGE SCALE GENOMIC DNA]</scope>
    <source>
        <strain>86-028NP</strain>
    </source>
</reference>
<keyword id="KW-0001">2Fe-2S</keyword>
<keyword id="KW-0004">4Fe-4S</keyword>
<keyword id="KW-0093">Biotin biosynthesis</keyword>
<keyword id="KW-0408">Iron</keyword>
<keyword id="KW-0411">Iron-sulfur</keyword>
<keyword id="KW-0479">Metal-binding</keyword>
<keyword id="KW-0949">S-adenosyl-L-methionine</keyword>
<keyword id="KW-0808">Transferase</keyword>
<protein>
    <recommendedName>
        <fullName evidence="1">Biotin synthase</fullName>
        <ecNumber evidence="1">2.8.1.6</ecNumber>
    </recommendedName>
</protein>
<proteinExistence type="inferred from homology"/>
<dbReference type="EC" id="2.8.1.6" evidence="1"/>
<dbReference type="EMBL" id="CP000057">
    <property type="protein sequence ID" value="AAX88047.1"/>
    <property type="molecule type" value="Genomic_DNA"/>
</dbReference>
<dbReference type="RefSeq" id="WP_005655985.1">
    <property type="nucleotide sequence ID" value="NC_007146.2"/>
</dbReference>
<dbReference type="SMR" id="Q4QLQ0"/>
<dbReference type="GeneID" id="93220046"/>
<dbReference type="KEGG" id="hit:NTHI1188"/>
<dbReference type="HOGENOM" id="CLU_033172_1_2_6"/>
<dbReference type="UniPathway" id="UPA00078">
    <property type="reaction ID" value="UER00162"/>
</dbReference>
<dbReference type="Proteomes" id="UP000002525">
    <property type="component" value="Chromosome"/>
</dbReference>
<dbReference type="GO" id="GO:0051537">
    <property type="term" value="F:2 iron, 2 sulfur cluster binding"/>
    <property type="evidence" value="ECO:0007669"/>
    <property type="project" value="UniProtKB-KW"/>
</dbReference>
<dbReference type="GO" id="GO:0051539">
    <property type="term" value="F:4 iron, 4 sulfur cluster binding"/>
    <property type="evidence" value="ECO:0007669"/>
    <property type="project" value="UniProtKB-KW"/>
</dbReference>
<dbReference type="GO" id="GO:0004076">
    <property type="term" value="F:biotin synthase activity"/>
    <property type="evidence" value="ECO:0007669"/>
    <property type="project" value="UniProtKB-UniRule"/>
</dbReference>
<dbReference type="GO" id="GO:0005506">
    <property type="term" value="F:iron ion binding"/>
    <property type="evidence" value="ECO:0007669"/>
    <property type="project" value="UniProtKB-UniRule"/>
</dbReference>
<dbReference type="GO" id="GO:0009102">
    <property type="term" value="P:biotin biosynthetic process"/>
    <property type="evidence" value="ECO:0007669"/>
    <property type="project" value="UniProtKB-UniRule"/>
</dbReference>
<dbReference type="CDD" id="cd01335">
    <property type="entry name" value="Radical_SAM"/>
    <property type="match status" value="1"/>
</dbReference>
<dbReference type="FunFam" id="3.20.20.70:FF:000011">
    <property type="entry name" value="Biotin synthase"/>
    <property type="match status" value="1"/>
</dbReference>
<dbReference type="Gene3D" id="3.20.20.70">
    <property type="entry name" value="Aldolase class I"/>
    <property type="match status" value="1"/>
</dbReference>
<dbReference type="HAMAP" id="MF_01694">
    <property type="entry name" value="BioB"/>
    <property type="match status" value="1"/>
</dbReference>
<dbReference type="InterPro" id="IPR013785">
    <property type="entry name" value="Aldolase_TIM"/>
</dbReference>
<dbReference type="InterPro" id="IPR010722">
    <property type="entry name" value="BATS_dom"/>
</dbReference>
<dbReference type="InterPro" id="IPR002684">
    <property type="entry name" value="Biotin_synth/BioAB"/>
</dbReference>
<dbReference type="InterPro" id="IPR024177">
    <property type="entry name" value="Biotin_synthase"/>
</dbReference>
<dbReference type="InterPro" id="IPR006638">
    <property type="entry name" value="Elp3/MiaA/NifB-like_rSAM"/>
</dbReference>
<dbReference type="InterPro" id="IPR007197">
    <property type="entry name" value="rSAM"/>
</dbReference>
<dbReference type="NCBIfam" id="TIGR00433">
    <property type="entry name" value="bioB"/>
    <property type="match status" value="1"/>
</dbReference>
<dbReference type="PANTHER" id="PTHR22976">
    <property type="entry name" value="BIOTIN SYNTHASE"/>
    <property type="match status" value="1"/>
</dbReference>
<dbReference type="PANTHER" id="PTHR22976:SF2">
    <property type="entry name" value="BIOTIN SYNTHASE, MITOCHONDRIAL"/>
    <property type="match status" value="1"/>
</dbReference>
<dbReference type="Pfam" id="PF06968">
    <property type="entry name" value="BATS"/>
    <property type="match status" value="1"/>
</dbReference>
<dbReference type="Pfam" id="PF04055">
    <property type="entry name" value="Radical_SAM"/>
    <property type="match status" value="1"/>
</dbReference>
<dbReference type="PIRSF" id="PIRSF001619">
    <property type="entry name" value="Biotin_synth"/>
    <property type="match status" value="1"/>
</dbReference>
<dbReference type="SFLD" id="SFLDF00272">
    <property type="entry name" value="biotin_synthase"/>
    <property type="match status" value="1"/>
</dbReference>
<dbReference type="SFLD" id="SFLDS00029">
    <property type="entry name" value="Radical_SAM"/>
    <property type="match status" value="1"/>
</dbReference>
<dbReference type="SMART" id="SM00876">
    <property type="entry name" value="BATS"/>
    <property type="match status" value="1"/>
</dbReference>
<dbReference type="SMART" id="SM00729">
    <property type="entry name" value="Elp3"/>
    <property type="match status" value="1"/>
</dbReference>
<dbReference type="SUPFAM" id="SSF102114">
    <property type="entry name" value="Radical SAM enzymes"/>
    <property type="match status" value="1"/>
</dbReference>
<dbReference type="PROSITE" id="PS51918">
    <property type="entry name" value="RADICAL_SAM"/>
    <property type="match status" value="1"/>
</dbReference>
<organism>
    <name type="scientific">Haemophilus influenzae (strain 86-028NP)</name>
    <dbReference type="NCBI Taxonomy" id="281310"/>
    <lineage>
        <taxon>Bacteria</taxon>
        <taxon>Pseudomonadati</taxon>
        <taxon>Pseudomonadota</taxon>
        <taxon>Gammaproteobacteria</taxon>
        <taxon>Pasteurellales</taxon>
        <taxon>Pasteurellaceae</taxon>
        <taxon>Haemophilus</taxon>
    </lineage>
</organism>